<proteinExistence type="evidence at protein level"/>
<name>GAL1_AURME</name>
<protein>
    <recommendedName>
        <fullName evidence="8">Transcription factor GAL1</fullName>
    </recommendedName>
    <alternativeName>
        <fullName evidence="8">Liamocins biosynthesis cluster protein GAL1</fullName>
    </alternativeName>
    <alternativeName>
        <fullName evidence="8">Zinc finger protein GAL1</fullName>
    </alternativeName>
</protein>
<gene>
    <name evidence="8" type="primary">GAL1</name>
</gene>
<keyword id="KW-0479">Metal-binding</keyword>
<keyword id="KW-0539">Nucleus</keyword>
<keyword id="KW-0862">Zinc</keyword>
<keyword id="KW-0863">Zinc-finger</keyword>
<comment type="function">
    <text evidence="5">Transcription factor; part of the gene cluster that mediates the biosynthesis of liamocins, glycolipids (also called heavy oils) composed of a single mannitol or arabitol headgroup linked to either three, four or even six 3,5-dihydroxydecanoic ester tail-groups (PubMed:32003433). Positively regulates the expression of PKS1 and EST1 that mediate the biosynthesis of liamocins (PubMed:32003433).</text>
</comment>
<comment type="subcellular location">
    <subcellularLocation>
        <location evidence="9">Nucleus</location>
    </subcellularLocation>
</comment>
<comment type="induction">
    <text evidence="6 7">Expression is regulated by the cAMP-PKA and HOG1 signaling pathways via the transcriptional activator MSN2 (PubMed:33375973). Moreover, expression is also increased at low pH by the pH signaling transcription factor PACC (PubMed:37740661).</text>
</comment>
<comment type="disruption phenotype">
    <text evidence="5">Completely abolishes the ability to produce any liamocins (PubMed:32003433). Blocks the expression of the PKS1 gene and reduced expression of the EST1 gene (PubMed:32003433).</text>
</comment>
<comment type="biotechnology">
    <text evidence="3 4">Liamocins have high bioactivity against the pathogenic bacteria Streptococcus spp. and can be potential new specific inhibitors of oral streptococcal biofilms without affecting normal oral microflora (PubMed:30627519). Liamocins are also able to inhibit human cancer cell lines such as breast cancer cell lines T47D and SK-BR3 or the cervical cancer cell line HeLa (PubMed:21293903).</text>
</comment>
<dbReference type="EMBL" id="MG983069">
    <property type="protein sequence ID" value="AYC07632.1"/>
    <property type="molecule type" value="Genomic_DNA"/>
</dbReference>
<dbReference type="SMR" id="A0A385XIL0"/>
<dbReference type="GO" id="GO:0005634">
    <property type="term" value="C:nucleus"/>
    <property type="evidence" value="ECO:0007669"/>
    <property type="project" value="UniProtKB-SubCell"/>
</dbReference>
<dbReference type="GO" id="GO:0003676">
    <property type="term" value="F:nucleic acid binding"/>
    <property type="evidence" value="ECO:0007669"/>
    <property type="project" value="InterPro"/>
</dbReference>
<dbReference type="GO" id="GO:0008270">
    <property type="term" value="F:zinc ion binding"/>
    <property type="evidence" value="ECO:0007669"/>
    <property type="project" value="UniProtKB-KW"/>
</dbReference>
<dbReference type="Gene3D" id="4.10.60.10">
    <property type="entry name" value="Zinc finger, CCHC-type"/>
    <property type="match status" value="1"/>
</dbReference>
<dbReference type="InterPro" id="IPR001878">
    <property type="entry name" value="Znf_CCHC"/>
</dbReference>
<dbReference type="InterPro" id="IPR036875">
    <property type="entry name" value="Znf_CCHC_sf"/>
</dbReference>
<dbReference type="Pfam" id="PF10175">
    <property type="entry name" value="MPP6"/>
    <property type="match status" value="1"/>
</dbReference>
<dbReference type="Pfam" id="PF00098">
    <property type="entry name" value="zf-CCHC"/>
    <property type="match status" value="1"/>
</dbReference>
<dbReference type="SMART" id="SM00343">
    <property type="entry name" value="ZnF_C2HC"/>
    <property type="match status" value="1"/>
</dbReference>
<dbReference type="SUPFAM" id="SSF57756">
    <property type="entry name" value="Retrovirus zinc finger-like domains"/>
    <property type="match status" value="1"/>
</dbReference>
<dbReference type="PROSITE" id="PS50158">
    <property type="entry name" value="ZF_CCHC"/>
    <property type="match status" value="1"/>
</dbReference>
<feature type="chain" id="PRO_0000461618" description="Transcription factor GAL1">
    <location>
        <begin position="1"/>
        <end position="272"/>
    </location>
</feature>
<feature type="zinc finger region" description="CCHC-type" evidence="1">
    <location>
        <begin position="240"/>
        <end position="255"/>
    </location>
</feature>
<feature type="region of interest" description="Disordered" evidence="2">
    <location>
        <begin position="1"/>
        <end position="49"/>
    </location>
</feature>
<feature type="region of interest" description="Disordered" evidence="2">
    <location>
        <begin position="102"/>
        <end position="215"/>
    </location>
</feature>
<feature type="region of interest" description="Disordered" evidence="2">
    <location>
        <begin position="246"/>
        <end position="272"/>
    </location>
</feature>
<feature type="compositionally biased region" description="Polar residues" evidence="2">
    <location>
        <begin position="1"/>
        <end position="10"/>
    </location>
</feature>
<feature type="compositionally biased region" description="Acidic residues" evidence="2">
    <location>
        <begin position="113"/>
        <end position="122"/>
    </location>
</feature>
<feature type="compositionally biased region" description="Acidic residues" evidence="2">
    <location>
        <begin position="152"/>
        <end position="174"/>
    </location>
</feature>
<feature type="compositionally biased region" description="Basic and acidic residues" evidence="2">
    <location>
        <begin position="175"/>
        <end position="215"/>
    </location>
</feature>
<reference key="1">
    <citation type="submission" date="2018-02" db="EMBL/GenBank/DDBJ databases">
        <authorList>
            <person name="Cohen D.B."/>
            <person name="Kent A.D."/>
        </authorList>
    </citation>
    <scope>NUCLEOTIDE SEQUENCE [GENOMIC DNA]</scope>
    <source>
        <strain>6-1-2</strain>
    </source>
</reference>
<reference key="2">
    <citation type="journal article" date="2011" name="Biotechnol. Lett.">
        <title>Heavy oils produced by Aureobasidium pullulans.</title>
        <authorList>
            <person name="Manitchotpisit P."/>
            <person name="Price N.P."/>
            <person name="Leathers T.D."/>
            <person name="Punnapayak H."/>
        </authorList>
    </citation>
    <scope>BIOTECHNOLOGY</scope>
</reference>
<reference key="3">
    <citation type="journal article" date="2019" name="Biotechnol. Rep.">
        <title>Inhibition of Streptococcus mutans and S. sobrinus biofilms by liamocins from Aureobasidium pullulans.</title>
        <authorList>
            <person name="Leathers T.D."/>
            <person name="Rich J.O."/>
            <person name="Bischoff K.M."/>
            <person name="Skory C.D."/>
            <person name="Nunnally M.S."/>
        </authorList>
    </citation>
    <scope>BIOTECHNOLOGY</scope>
</reference>
<reference key="4">
    <citation type="journal article" date="2020" name="Biochem. J.">
        <title>Genetic evidences for the core biosynthesis pathway, regulation, transport and secretion of liamocins in yeast-like fungal cells.</title>
        <authorList>
            <person name="Xue S.J."/>
            <person name="Liu G.L."/>
            <person name="Chi Z."/>
            <person name="Gao Z.C."/>
            <person name="Hu Z."/>
            <person name="Chi Z.M."/>
        </authorList>
    </citation>
    <scope>FUNCTION</scope>
    <scope>DISRUPTION PHENOTYPE</scope>
</reference>
<reference key="5">
    <citation type="journal article" date="2021" name="Enzyme Microb. Technol.">
        <title>cAMP-PKA and HOG1 signaling pathways regulate liamocin production by different ways via the transcriptional activator Msn2 in Aureobasidium melanogenum.</title>
        <authorList>
            <person name="Zhang M."/>
            <person name="Gao Z.C."/>
            <person name="Chi Z."/>
            <person name="Liu G.L."/>
            <person name="Hu Z."/>
            <person name="Chi Z.M."/>
        </authorList>
    </citation>
    <scope>INDUCTION</scope>
</reference>
<reference key="6">
    <citation type="journal article" date="2024" name="Biotechnol. J.">
        <title>Liamocin biosynthesis is induced by an autogenous host acid activation in Aureobasidium melanogenum.</title>
        <authorList>
            <person name="Zhang M."/>
            <person name="Wei X."/>
            <person name="Wang P."/>
            <person name="Chi Z."/>
            <person name="Liu G.L."/>
            <person name="Chi Z.M."/>
        </authorList>
    </citation>
    <scope>INDUCTION</scope>
</reference>
<accession>A0A385XIL0</accession>
<sequence length="272" mass="29636">MAGKNMSSRLLNMKFMQRASASTPTTPTTPDGTRPSKRLRTEAAPSPETRAFQEAAAAEEAKKNAFIERAAAEAGETKWVLSVSDDKPKTAGQGLRIVEAGYGAIDSGAPIPESDDDQDEEQSAGMAGRRSFGKFNKAVERQHNPDLSSPESEQDSDASSDSDSDDDEDLDEAELLIKAERKEAAAKLRAERKAQRKADEVKSKQMAERRRSRDINLNKVGGISNAAIRNKQANVANMACHVCGQKGHLQKDCPDRKQRRGDKRKSGGAMDY</sequence>
<evidence type="ECO:0000255" key="1">
    <source>
        <dbReference type="PROSITE-ProRule" id="PRU00047"/>
    </source>
</evidence>
<evidence type="ECO:0000256" key="2">
    <source>
        <dbReference type="SAM" id="MobiDB-lite"/>
    </source>
</evidence>
<evidence type="ECO:0000269" key="3">
    <source>
    </source>
</evidence>
<evidence type="ECO:0000269" key="4">
    <source>
    </source>
</evidence>
<evidence type="ECO:0000269" key="5">
    <source>
    </source>
</evidence>
<evidence type="ECO:0000269" key="6">
    <source>
    </source>
</evidence>
<evidence type="ECO:0000269" key="7">
    <source>
    </source>
</evidence>
<evidence type="ECO:0000303" key="8">
    <source>
    </source>
</evidence>
<evidence type="ECO:0000305" key="9">
    <source>
    </source>
</evidence>
<organism>
    <name type="scientific">Aureobasidium melanogenum</name>
    <name type="common">Aureobasidium pullulans var. melanogenum</name>
    <dbReference type="NCBI Taxonomy" id="46634"/>
    <lineage>
        <taxon>Eukaryota</taxon>
        <taxon>Fungi</taxon>
        <taxon>Dikarya</taxon>
        <taxon>Ascomycota</taxon>
        <taxon>Pezizomycotina</taxon>
        <taxon>Dothideomycetes</taxon>
        <taxon>Dothideomycetidae</taxon>
        <taxon>Dothideales</taxon>
        <taxon>Saccotheciaceae</taxon>
        <taxon>Aureobasidium</taxon>
    </lineage>
</organism>